<proteinExistence type="inferred from homology"/>
<keyword id="KW-0998">Cell outer membrane</keyword>
<keyword id="KW-0449">Lipoprotein</keyword>
<keyword id="KW-0472">Membrane</keyword>
<keyword id="KW-0564">Palmitate</keyword>
<keyword id="KW-0732">Signal</keyword>
<dbReference type="EMBL" id="CP000026">
    <property type="protein sequence ID" value="AAV77981.1"/>
    <property type="molecule type" value="Genomic_DNA"/>
</dbReference>
<dbReference type="RefSeq" id="WP_001269950.1">
    <property type="nucleotide sequence ID" value="NC_006511.1"/>
</dbReference>
<dbReference type="SMR" id="Q5PM87"/>
<dbReference type="KEGG" id="spt:SPA2087"/>
<dbReference type="HOGENOM" id="CLU_103309_1_1_6"/>
<dbReference type="Proteomes" id="UP000008185">
    <property type="component" value="Chromosome"/>
</dbReference>
<dbReference type="GO" id="GO:0009279">
    <property type="term" value="C:cell outer membrane"/>
    <property type="evidence" value="ECO:0007669"/>
    <property type="project" value="UniProtKB-SubCell"/>
</dbReference>
<dbReference type="GO" id="GO:1990351">
    <property type="term" value="C:transporter complex"/>
    <property type="evidence" value="ECO:0007669"/>
    <property type="project" value="TreeGrafter"/>
</dbReference>
<dbReference type="GO" id="GO:0001530">
    <property type="term" value="F:lipopolysaccharide binding"/>
    <property type="evidence" value="ECO:0007669"/>
    <property type="project" value="TreeGrafter"/>
</dbReference>
<dbReference type="GO" id="GO:0043165">
    <property type="term" value="P:Gram-negative-bacterium-type cell outer membrane assembly"/>
    <property type="evidence" value="ECO:0007669"/>
    <property type="project" value="UniProtKB-UniRule"/>
</dbReference>
<dbReference type="GO" id="GO:0015920">
    <property type="term" value="P:lipopolysaccharide transport"/>
    <property type="evidence" value="ECO:0007669"/>
    <property type="project" value="TreeGrafter"/>
</dbReference>
<dbReference type="FunFam" id="3.30.160.150:FF:000001">
    <property type="entry name" value="LPS-assembly lipoprotein LptE"/>
    <property type="match status" value="1"/>
</dbReference>
<dbReference type="Gene3D" id="3.30.160.150">
    <property type="entry name" value="Lipoprotein like domain"/>
    <property type="match status" value="1"/>
</dbReference>
<dbReference type="HAMAP" id="MF_01186">
    <property type="entry name" value="LPS_assembly_LptE"/>
    <property type="match status" value="1"/>
</dbReference>
<dbReference type="InterPro" id="IPR007485">
    <property type="entry name" value="LPS_assembly_LptE"/>
</dbReference>
<dbReference type="NCBIfam" id="NF008062">
    <property type="entry name" value="PRK10796.1"/>
    <property type="match status" value="1"/>
</dbReference>
<dbReference type="PANTHER" id="PTHR38098">
    <property type="entry name" value="LPS-ASSEMBLY LIPOPROTEIN LPTE"/>
    <property type="match status" value="1"/>
</dbReference>
<dbReference type="PANTHER" id="PTHR38098:SF1">
    <property type="entry name" value="LPS-ASSEMBLY LIPOPROTEIN LPTE"/>
    <property type="match status" value="1"/>
</dbReference>
<dbReference type="Pfam" id="PF04390">
    <property type="entry name" value="LptE"/>
    <property type="match status" value="1"/>
</dbReference>
<dbReference type="PROSITE" id="PS51257">
    <property type="entry name" value="PROKAR_LIPOPROTEIN"/>
    <property type="match status" value="1"/>
</dbReference>
<reference key="1">
    <citation type="journal article" date="2004" name="Nat. Genet.">
        <title>Comparison of genome degradation in Paratyphi A and Typhi, human-restricted serovars of Salmonella enterica that cause typhoid.</title>
        <authorList>
            <person name="McClelland M."/>
            <person name="Sanderson K.E."/>
            <person name="Clifton S.W."/>
            <person name="Latreille P."/>
            <person name="Porwollik S."/>
            <person name="Sabo A."/>
            <person name="Meyer R."/>
            <person name="Bieri T."/>
            <person name="Ozersky P."/>
            <person name="McLellan M."/>
            <person name="Harkins C.R."/>
            <person name="Wang C."/>
            <person name="Nguyen C."/>
            <person name="Berghoff A."/>
            <person name="Elliott G."/>
            <person name="Kohlberg S."/>
            <person name="Strong C."/>
            <person name="Du F."/>
            <person name="Carter J."/>
            <person name="Kremizki C."/>
            <person name="Layman D."/>
            <person name="Leonard S."/>
            <person name="Sun H."/>
            <person name="Fulton L."/>
            <person name="Nash W."/>
            <person name="Miner T."/>
            <person name="Minx P."/>
            <person name="Delehaunty K."/>
            <person name="Fronick C."/>
            <person name="Magrini V."/>
            <person name="Nhan M."/>
            <person name="Warren W."/>
            <person name="Florea L."/>
            <person name="Spieth J."/>
            <person name="Wilson R.K."/>
        </authorList>
    </citation>
    <scope>NUCLEOTIDE SEQUENCE [LARGE SCALE GENOMIC DNA]</scope>
    <source>
        <strain>ATCC 9150 / SARB42</strain>
    </source>
</reference>
<protein>
    <recommendedName>
        <fullName evidence="1">LPS-assembly lipoprotein LptE</fullName>
    </recommendedName>
</protein>
<gene>
    <name evidence="1" type="primary">lptE</name>
    <name type="synonym">rlpB</name>
    <name type="ordered locus">SPA2087</name>
</gene>
<organism>
    <name type="scientific">Salmonella paratyphi A (strain ATCC 9150 / SARB42)</name>
    <dbReference type="NCBI Taxonomy" id="295319"/>
    <lineage>
        <taxon>Bacteria</taxon>
        <taxon>Pseudomonadati</taxon>
        <taxon>Pseudomonadota</taxon>
        <taxon>Gammaproteobacteria</taxon>
        <taxon>Enterobacterales</taxon>
        <taxon>Enterobacteriaceae</taxon>
        <taxon>Salmonella</taxon>
    </lineage>
</organism>
<feature type="signal peptide" evidence="1">
    <location>
        <begin position="1"/>
        <end position="18"/>
    </location>
</feature>
<feature type="chain" id="PRO_0000281182" description="LPS-assembly lipoprotein LptE">
    <location>
        <begin position="19"/>
        <end position="196"/>
    </location>
</feature>
<feature type="region of interest" description="Disordered" evidence="2">
    <location>
        <begin position="171"/>
        <end position="196"/>
    </location>
</feature>
<feature type="lipid moiety-binding region" description="N-palmitoyl cysteine" evidence="1">
    <location>
        <position position="19"/>
    </location>
</feature>
<feature type="lipid moiety-binding region" description="S-diacylglycerol cysteine" evidence="1">
    <location>
        <position position="19"/>
    </location>
</feature>
<accession>Q5PM87</accession>
<name>LPTE_SALPA</name>
<sequence length="196" mass="21431">MRYLVTLLLSLAVLVTAGCGWHLRSTTQVPASMKTMILDSGDPNGPLSRAVRNQLRLNNVNLLDKDTTRKDVPSLRLGTVTISQDTASVFQDGQTAEYQMVMTVNASVLIPGHDIYPISTKVYRSFFDNPQMALAKDNEQAMIVQEMYDKAAEQLIRKLTSVRAADIQATKEEATADNETAAPASTPARVSTTLSN</sequence>
<comment type="function">
    <text evidence="1">Together with LptD, is involved in the assembly of lipopolysaccharide (LPS) at the surface of the outer membrane. Required for the proper assembly of LptD. Binds LPS and may serve as the LPS recognition site at the outer membrane.</text>
</comment>
<comment type="subunit">
    <text evidence="1">Component of the lipopolysaccharide transport and assembly complex. Interacts with LptD.</text>
</comment>
<comment type="subcellular location">
    <subcellularLocation>
        <location evidence="1">Cell outer membrane</location>
        <topology evidence="1">Lipid-anchor</topology>
    </subcellularLocation>
</comment>
<comment type="similarity">
    <text evidence="1">Belongs to the LptE lipoprotein family.</text>
</comment>
<evidence type="ECO:0000255" key="1">
    <source>
        <dbReference type="HAMAP-Rule" id="MF_01186"/>
    </source>
</evidence>
<evidence type="ECO:0000256" key="2">
    <source>
        <dbReference type="SAM" id="MobiDB-lite"/>
    </source>
</evidence>